<comment type="function">
    <text evidence="1">A gamma subtype methylase, recognizes the double-stranded sequence 5'-CTCGAG-3', methylates A-5 on both strands, and protects the DNA from cleavage by the XhoI endonuclease.</text>
</comment>
<comment type="catalytic activity">
    <reaction>
        <text>a 2'-deoxyadenosine in DNA + S-adenosyl-L-methionine = an N(6)-methyl-2'-deoxyadenosine in DNA + S-adenosyl-L-homocysteine + H(+)</text>
        <dbReference type="Rhea" id="RHEA:15197"/>
        <dbReference type="Rhea" id="RHEA-COMP:12418"/>
        <dbReference type="Rhea" id="RHEA-COMP:12419"/>
        <dbReference type="ChEBI" id="CHEBI:15378"/>
        <dbReference type="ChEBI" id="CHEBI:57856"/>
        <dbReference type="ChEBI" id="CHEBI:59789"/>
        <dbReference type="ChEBI" id="CHEBI:90615"/>
        <dbReference type="ChEBI" id="CHEBI:90616"/>
        <dbReference type="EC" id="2.1.1.72"/>
    </reaction>
</comment>
<comment type="similarity">
    <text evidence="2">Belongs to the N(4)/N(6)-methyltransferase family.</text>
</comment>
<sequence length="546" mass="61025">MPDERGAIFTRREVVEFILDLVGYTEDRDLAQTKLLEPSAGHADFLLPIIGRLVRSYVAHGGDLTRGAQTLGPAIRAYEVHESSLETARSVVVAELLRLGVKKAAADGLGRTWLVRADFLMAPLPHTFDFVVGNPPYVRQELIPAVLLARYRARFKTLYDRADLYIPFYERCLDVLAPGGRLGFICTDRWTKNKYGGPLRAMVSEEFSLTHFVDLVDTQAFLSNVMTYPAITVIERPKPKSKARPTRVAYRPAISAEVFGPLAKAMTGTKLNHKAGVVEMSGVVNGSEPWILHQADRLALVRRLEETLPTLEEAGCKVGIGVATGNDGVYIGDMKTLNVEPSRKLPLARTQDLRGGSIDWQGKGVLNPFEEDGQVVDLASYPKFAAYLQEHAIQIKARHVAKKNPERWFRTIDRIYPALAKTPKLLVPDIKGDAHIVYEEGKLYPHHNLYFITANEWDLRALQAVLMSGVARLFVGTYSTTMRGGFLRFQAQYLRRIRVPHWKNVPKPLQKALREAAVAGDREAANRATYQLYGLNEAERDIVATV</sequence>
<keyword id="KW-0238">DNA-binding</keyword>
<keyword id="KW-0489">Methyltransferase</keyword>
<keyword id="KW-0680">Restriction system</keyword>
<keyword id="KW-0949">S-adenosyl-L-methionine</keyword>
<keyword id="KW-0808">Transferase</keyword>
<evidence type="ECO:0000303" key="1">
    <source>
    </source>
</evidence>
<evidence type="ECO:0000305" key="2"/>
<protein>
    <recommendedName>
        <fullName evidence="1">Type II methyltransferase M.XhoI</fullName>
        <shortName evidence="1">M.XhoI</shortName>
        <ecNumber>2.1.1.72</ecNumber>
    </recommendedName>
    <alternativeName>
        <fullName>Adenine-specific methyltransferase XhoI</fullName>
    </alternativeName>
    <alternativeName>
        <fullName>Modification methylase XhoI</fullName>
    </alternativeName>
</protein>
<proteinExistence type="inferred from homology"/>
<name>MTX1_XANVA</name>
<dbReference type="EC" id="2.1.1.72"/>
<dbReference type="EMBL" id="AB046567">
    <property type="protein sequence ID" value="BAB03596.1"/>
    <property type="molecule type" value="Genomic_DNA"/>
</dbReference>
<dbReference type="SMR" id="Q9KVZ8"/>
<dbReference type="STRING" id="56459.NX79_21405"/>
<dbReference type="PRO" id="PR:Q9KVZ8"/>
<dbReference type="GO" id="GO:0003677">
    <property type="term" value="F:DNA binding"/>
    <property type="evidence" value="ECO:0007669"/>
    <property type="project" value="UniProtKB-KW"/>
</dbReference>
<dbReference type="GO" id="GO:0009007">
    <property type="term" value="F:site-specific DNA-methyltransferase (adenine-specific) activity"/>
    <property type="evidence" value="ECO:0007669"/>
    <property type="project" value="UniProtKB-EC"/>
</dbReference>
<dbReference type="GO" id="GO:0009307">
    <property type="term" value="P:DNA restriction-modification system"/>
    <property type="evidence" value="ECO:0007669"/>
    <property type="project" value="UniProtKB-KW"/>
</dbReference>
<dbReference type="GO" id="GO:0032259">
    <property type="term" value="P:methylation"/>
    <property type="evidence" value="ECO:0007669"/>
    <property type="project" value="UniProtKB-KW"/>
</dbReference>
<dbReference type="Gene3D" id="3.40.50.150">
    <property type="entry name" value="Vaccinia Virus protein VP39"/>
    <property type="match status" value="1"/>
</dbReference>
<dbReference type="InterPro" id="IPR002052">
    <property type="entry name" value="DNA_methylase_N6_adenine_CS"/>
</dbReference>
<dbReference type="InterPro" id="IPR011639">
    <property type="entry name" value="MethylTrfase_TaqI-like_dom"/>
</dbReference>
<dbReference type="InterPro" id="IPR050953">
    <property type="entry name" value="N4_N6_ade-DNA_methylase"/>
</dbReference>
<dbReference type="InterPro" id="IPR029063">
    <property type="entry name" value="SAM-dependent_MTases_sf"/>
</dbReference>
<dbReference type="InterPro" id="IPR025931">
    <property type="entry name" value="TaqI_C"/>
</dbReference>
<dbReference type="PANTHER" id="PTHR33841:SF5">
    <property type="entry name" value="DNA METHYLASE (MODIFICATION METHYLASE) (METHYLTRANSFERASE)-RELATED"/>
    <property type="match status" value="1"/>
</dbReference>
<dbReference type="PANTHER" id="PTHR33841">
    <property type="entry name" value="DNA METHYLTRANSFERASE YEEA-RELATED"/>
    <property type="match status" value="1"/>
</dbReference>
<dbReference type="Pfam" id="PF07669">
    <property type="entry name" value="Eco57I"/>
    <property type="match status" value="1"/>
</dbReference>
<dbReference type="Pfam" id="PF12950">
    <property type="entry name" value="TaqI_C"/>
    <property type="match status" value="1"/>
</dbReference>
<dbReference type="PRINTS" id="PR00507">
    <property type="entry name" value="N12N6MTFRASE"/>
</dbReference>
<dbReference type="SUPFAM" id="SSF53335">
    <property type="entry name" value="S-adenosyl-L-methionine-dependent methyltransferases"/>
    <property type="match status" value="1"/>
</dbReference>
<dbReference type="PROSITE" id="PS00092">
    <property type="entry name" value="N6_MTASE"/>
    <property type="match status" value="1"/>
</dbReference>
<accession>Q9KVZ8</accession>
<organism>
    <name type="scientific">Xanthomonas vasicola</name>
    <dbReference type="NCBI Taxonomy" id="56459"/>
    <lineage>
        <taxon>Bacteria</taxon>
        <taxon>Pseudomonadati</taxon>
        <taxon>Pseudomonadota</taxon>
        <taxon>Gammaproteobacteria</taxon>
        <taxon>Lysobacterales</taxon>
        <taxon>Lysobacteraceae</taxon>
        <taxon>Xanthomonas</taxon>
    </lineage>
</organism>
<reference key="1">
    <citation type="submission" date="2000-07" db="EMBL/GenBank/DDBJ databases">
        <title>Nucleotide sequences of the XhoI methylase and endonuclease genes.</title>
        <authorList>
            <person name="Morita M."/>
            <person name="Sugino Y."/>
        </authorList>
    </citation>
    <scope>NUCLEOTIDE SEQUENCE [GENOMIC DNA]</scope>
    <source>
        <strain>ATCC 13461 / XH 3 / LMG 7416</strain>
    </source>
</reference>
<reference key="2">
    <citation type="journal article" date="2003" name="Nucleic Acids Res.">
        <title>A nomenclature for restriction enzymes, DNA methyltransferases, homing endonucleases and their genes.</title>
        <authorList>
            <person name="Roberts R.J."/>
            <person name="Belfort M."/>
            <person name="Bestor T."/>
            <person name="Bhagwat A.S."/>
            <person name="Bickle T.A."/>
            <person name="Bitinaite J."/>
            <person name="Blumenthal R.M."/>
            <person name="Degtyarev S.K."/>
            <person name="Dryden D.T."/>
            <person name="Dybvig K."/>
            <person name="Firman K."/>
            <person name="Gromova E.S."/>
            <person name="Gumport R.I."/>
            <person name="Halford S.E."/>
            <person name="Hattman S."/>
            <person name="Heitman J."/>
            <person name="Hornby D.P."/>
            <person name="Janulaitis A."/>
            <person name="Jeltsch A."/>
            <person name="Josephsen J."/>
            <person name="Kiss A."/>
            <person name="Klaenhammer T.R."/>
            <person name="Kobayashi I."/>
            <person name="Kong H."/>
            <person name="Krueger D.H."/>
            <person name="Lacks S."/>
            <person name="Marinus M.G."/>
            <person name="Miyahara M."/>
            <person name="Morgan R.D."/>
            <person name="Murray N.E."/>
            <person name="Nagaraja V."/>
            <person name="Piekarowicz A."/>
            <person name="Pingoud A."/>
            <person name="Raleigh E."/>
            <person name="Rao D.N."/>
            <person name="Reich N."/>
            <person name="Repin V.E."/>
            <person name="Selker E.U."/>
            <person name="Shaw P.C."/>
            <person name="Stein D.C."/>
            <person name="Stoddard B.L."/>
            <person name="Szybalski W."/>
            <person name="Trautner T.A."/>
            <person name="Van Etten J.L."/>
            <person name="Vitor J.M."/>
            <person name="Wilson G.G."/>
            <person name="Xu S.Y."/>
        </authorList>
    </citation>
    <scope>NOMENCLATURE</scope>
    <scope>SUBTYPE</scope>
</reference>
<feature type="chain" id="PRO_0000087984" description="Type II methyltransferase M.XhoI">
    <location>
        <begin position="1"/>
        <end position="546"/>
    </location>
</feature>